<accession>P31688</accession>
<accession>D6VS60</accession>
<evidence type="ECO:0000269" key="1">
    <source>
    </source>
</evidence>
<evidence type="ECO:0000269" key="2">
    <source>
    </source>
</evidence>
<evidence type="ECO:0000269" key="3">
    <source>
    </source>
</evidence>
<evidence type="ECO:0000269" key="4">
    <source>
    </source>
</evidence>
<evidence type="ECO:0000269" key="5">
    <source>
    </source>
</evidence>
<evidence type="ECO:0000303" key="6">
    <source>
    </source>
</evidence>
<evidence type="ECO:0000305" key="7"/>
<evidence type="ECO:0000305" key="8">
    <source>
    </source>
</evidence>
<sequence length="896" mass="102976">MTTTAQDNSPKKRQRIINCVTQLPYKIQLGESNDDWKISATTGNSALFSSLEYLQFDSTEYEQHVVGWTGEITRTERNLFTREAKEKPQDLDDDPLYLTKEQINGLTTTLQDHMKSDKEAKTDTTQTAPVTNNVHPVWLLRKNQSRWRNYAEKVIWPTFHYILNPSNEGEQEKNWWYDYVKFNEAYAQKIGEVYRKGDIIWIHDYYLLLLPQLLRMKFNDESIIIGYFHHAPWPSNEYFRCLPRRKQILDGLVGANRICFQNESFSRHFVSSCKRLLDATAKKSKNSSNSDQYQVSVYGGDVLVDSLPIGVNTTQILKDAFTKDIDSKVLSIKQAYQNKKIIIGRDRLDSVRGVVQKLRAFETFLAMYPEWRDQVVLIQVSSPTANRNSPQTIRLEQQVNELVNSINSEYGNLNFSPVQHYYMRIPKDVYLSLLRVADLCLITSVRDGMNTTALEYVTVKSHMSNFLCYGNPLILSEFSGSSNVLKDAIVVNPWDSVAVAKSINMALKLDKEEKSNLESKLWKEVPTIQDWTNKFLSSLKEQASSNDDMERKMTPALNRPVLLENYKQAKRRLFLFDYDGTLTPIVKDPAAAIPSARLYTILQKLCADPHNQIWIISGRDQKFLNKWLGGKLPQLGLSAEHGCFMKDVSCQDWVNLTEKVDMSWQVRVNEVMEEFTTRTPGSFIERKKVALTWHYRRTVPELGEFHAKELKEKLLSFTDDFDLEVMDGKANIEVRPRFVNKGEIVKRLVWHQHGKPQDMLKGISEKLPKDEMPDFVLCLGDDFTDEDMFRQLNTIETCWKEKYPDQKNQWGNYGFYPVTVGSASKKTVAKAHLTDPQQVLETLGLLVGDVSLFQSAGTVDLDSRGHVKNSESSLKSKLASKAYVMKRSASYTGAKV</sequence>
<organism>
    <name type="scientific">Saccharomyces cerevisiae (strain ATCC 204508 / S288c)</name>
    <name type="common">Baker's yeast</name>
    <dbReference type="NCBI Taxonomy" id="559292"/>
    <lineage>
        <taxon>Eukaryota</taxon>
        <taxon>Fungi</taxon>
        <taxon>Dikarya</taxon>
        <taxon>Ascomycota</taxon>
        <taxon>Saccharomycotina</taxon>
        <taxon>Saccharomycetes</taxon>
        <taxon>Saccharomycetales</taxon>
        <taxon>Saccharomycetaceae</taxon>
        <taxon>Saccharomyces</taxon>
    </lineage>
</organism>
<feature type="chain" id="PRO_0000122509" description="Trehalose-phosphatase">
    <location>
        <begin position="1"/>
        <end position="896"/>
    </location>
</feature>
<feature type="region of interest" description="Glycosyltransferase">
    <location>
        <begin position="1"/>
        <end position="554"/>
    </location>
</feature>
<feature type="sequence conflict" description="In Ref. 1; CAA50025." evidence="7" ref="1">
    <original>F</original>
    <variation>Y</variation>
    <location>
        <position position="48"/>
    </location>
</feature>
<feature type="sequence conflict" description="In Ref. 1; CAA50025." evidence="7" ref="1">
    <original>N</original>
    <variation>D</variation>
    <location>
        <position position="289"/>
    </location>
</feature>
<feature type="sequence conflict" description="In Ref. 1; CAA50025." evidence="7" ref="1">
    <original>Q</original>
    <variation>K</variation>
    <location>
        <position position="542"/>
    </location>
</feature>
<feature type="sequence conflict" description="In Ref. 1; CAA50025." evidence="7" ref="1">
    <original>N</original>
    <variation>D</variation>
    <location>
        <position position="546"/>
    </location>
</feature>
<feature type="sequence conflict" description="In Ref. 1; CAA50025." evidence="7" ref="1">
    <original>M</original>
    <variation>V</variation>
    <location>
        <position position="549"/>
    </location>
</feature>
<keyword id="KW-0963">Cytoplasm</keyword>
<keyword id="KW-0903">Direct protein sequencing</keyword>
<keyword id="KW-0378">Hydrolase</keyword>
<keyword id="KW-1185">Reference proteome</keyword>
<keyword id="KW-0346">Stress response</keyword>
<name>TPS2_YEAST</name>
<comment type="function">
    <text evidence="3 4">Phosphatase catalytic subunit of the trehalose synthase complex that catalyzes the production of trehalose from glucose-6-phosphate and UDP-alpha-D-glucose in a two step process.</text>
</comment>
<comment type="catalytic activity">
    <reaction evidence="3">
        <text>alpha,alpha-trehalose 6-phosphate + H2O = alpha,alpha-trehalose + phosphate</text>
        <dbReference type="Rhea" id="RHEA:23420"/>
        <dbReference type="ChEBI" id="CHEBI:15377"/>
        <dbReference type="ChEBI" id="CHEBI:16551"/>
        <dbReference type="ChEBI" id="CHEBI:43474"/>
        <dbReference type="ChEBI" id="CHEBI:58429"/>
        <dbReference type="EC" id="3.1.3.12"/>
    </reaction>
</comment>
<comment type="cofactor">
    <cofactor evidence="8">
        <name>Mg(2+)</name>
        <dbReference type="ChEBI" id="CHEBI:18420"/>
    </cofactor>
</comment>
<comment type="activity regulation">
    <text evidence="8">Inhibited by EDTA.</text>
</comment>
<comment type="biophysicochemical properties">
    <kinetics>
        <KM evidence="3">0.2 mM for trehalose 6-phosphate (at pH 6.0)</KM>
        <KM evidence="3">0.5 mM for trehalose 6-phosphate (at pH 7.5)</KM>
        <Vmax evidence="3">20.0 nmol/min/mg enzyme (at pH 6.0)</Vmax>
        <Vmax evidence="3">10.0 nmol/min/mg enzyme (at pH 7.5)</Vmax>
    </kinetics>
    <phDependence>
        <text evidence="3">Optimum pH is 6.0.</text>
    </phDependence>
</comment>
<comment type="pathway">
    <text evidence="7">Carbohydrate biosynthesis.</text>
</comment>
<comment type="subunit">
    <text evidence="5">The trehalose synthase complex is composed of the two catalytic subunits TPS1 and TPS2, and at least one of the two regulatory subunits TPS3 or TSL1.</text>
</comment>
<comment type="interaction">
    <interactant intactId="EBI-19440">
        <id>P31688</id>
    </interactant>
    <interactant intactId="EBI-19430">
        <id>Q00764</id>
        <label>TPS1</label>
    </interactant>
    <organismsDiffer>false</organismsDiffer>
    <experiments>8</experiments>
</comment>
<comment type="interaction">
    <interactant intactId="EBI-19440">
        <id>P31688</id>
    </interactant>
    <interactant intactId="EBI-19448">
        <id>P38426</id>
        <label>TPS3</label>
    </interactant>
    <organismsDiffer>false</organismsDiffer>
    <experiments>8</experiments>
</comment>
<comment type="interaction">
    <interactant intactId="EBI-19440">
        <id>P31688</id>
    </interactant>
    <interactant intactId="EBI-19638">
        <id>P38427</id>
        <label>TSL1</label>
    </interactant>
    <organismsDiffer>false</organismsDiffer>
    <experiments>4</experiments>
</comment>
<comment type="subcellular location">
    <subcellularLocation>
        <location evidence="1">Cytoplasm</location>
    </subcellularLocation>
</comment>
<comment type="induction">
    <text>By heat shock. Repressed by glucose.</text>
</comment>
<comment type="miscellaneous">
    <text evidence="2">Present with 22700 molecules/cell in log phase SD medium.</text>
</comment>
<comment type="similarity">
    <text evidence="7">In the N-terminal section; belongs to the glycosyltransferase 20 family.</text>
</comment>
<comment type="similarity">
    <text evidence="7">In the C-terminal section; belongs to the trehalose phosphatase family.</text>
</comment>
<reference key="1">
    <citation type="journal article" date="1993" name="Eur. J. Biochem.">
        <title>Disruption of TPS2, the gene encoding the 100-kDa subunit of the trehalose-6-phosphate synthase/phosphatase complex in Saccharomyces cerevisiae, causes accumulation of trehalose-6-phosphate and loss of trehalose-6-phosphate phosphatase activity.</title>
        <authorList>
            <person name="de Virgilio C."/>
            <person name="Buerckert N."/>
            <person name="Bell W."/>
            <person name="Jenoe P."/>
            <person name="Boller T."/>
            <person name="Wiemken A."/>
        </authorList>
    </citation>
    <scope>NUCLEOTIDE SEQUENCE [GENOMIC DNA]</scope>
    <scope>PARTIAL PROTEIN SEQUENCE</scope>
    <source>
        <strain>C13-ABYS86</strain>
    </source>
</reference>
<reference key="2">
    <citation type="journal article" date="1997" name="Nature">
        <title>The nucleotide sequence of Saccharomyces cerevisiae chromosome IV.</title>
        <authorList>
            <person name="Jacq C."/>
            <person name="Alt-Moerbe J."/>
            <person name="Andre B."/>
            <person name="Arnold W."/>
            <person name="Bahr A."/>
            <person name="Ballesta J.P.G."/>
            <person name="Bargues M."/>
            <person name="Baron L."/>
            <person name="Becker A."/>
            <person name="Biteau N."/>
            <person name="Bloecker H."/>
            <person name="Blugeon C."/>
            <person name="Boskovic J."/>
            <person name="Brandt P."/>
            <person name="Brueckner M."/>
            <person name="Buitrago M.J."/>
            <person name="Coster F."/>
            <person name="Delaveau T."/>
            <person name="del Rey F."/>
            <person name="Dujon B."/>
            <person name="Eide L.G."/>
            <person name="Garcia-Cantalejo J.M."/>
            <person name="Goffeau A."/>
            <person name="Gomez-Peris A."/>
            <person name="Granotier C."/>
            <person name="Hanemann V."/>
            <person name="Hankeln T."/>
            <person name="Hoheisel J.D."/>
            <person name="Jaeger W."/>
            <person name="Jimenez A."/>
            <person name="Jonniaux J.-L."/>
            <person name="Kraemer C."/>
            <person name="Kuester H."/>
            <person name="Laamanen P."/>
            <person name="Legros Y."/>
            <person name="Louis E.J."/>
            <person name="Moeller-Rieker S."/>
            <person name="Monnet A."/>
            <person name="Moro M."/>
            <person name="Mueller-Auer S."/>
            <person name="Nussbaumer B."/>
            <person name="Paricio N."/>
            <person name="Paulin L."/>
            <person name="Perea J."/>
            <person name="Perez-Alonso M."/>
            <person name="Perez-Ortin J.E."/>
            <person name="Pohl T.M."/>
            <person name="Prydz H."/>
            <person name="Purnelle B."/>
            <person name="Rasmussen S.W."/>
            <person name="Remacha M.A."/>
            <person name="Revuelta J.L."/>
            <person name="Rieger M."/>
            <person name="Salom D."/>
            <person name="Saluz H.P."/>
            <person name="Saiz J.E."/>
            <person name="Saren A.-M."/>
            <person name="Schaefer M."/>
            <person name="Scharfe M."/>
            <person name="Schmidt E.R."/>
            <person name="Schneider C."/>
            <person name="Scholler P."/>
            <person name="Schwarz S."/>
            <person name="Soler-Mira A."/>
            <person name="Urrestarazu L.A."/>
            <person name="Verhasselt P."/>
            <person name="Vissers S."/>
            <person name="Voet M."/>
            <person name="Volckaert G."/>
            <person name="Wagner G."/>
            <person name="Wambutt R."/>
            <person name="Wedler E."/>
            <person name="Wedler H."/>
            <person name="Woelfl S."/>
            <person name="Harris D.E."/>
            <person name="Bowman S."/>
            <person name="Brown D."/>
            <person name="Churcher C.M."/>
            <person name="Connor R."/>
            <person name="Dedman K."/>
            <person name="Gentles S."/>
            <person name="Hamlin N."/>
            <person name="Hunt S."/>
            <person name="Jones L."/>
            <person name="McDonald S."/>
            <person name="Murphy L.D."/>
            <person name="Niblett D."/>
            <person name="Odell C."/>
            <person name="Oliver K."/>
            <person name="Rajandream M.A."/>
            <person name="Richards C."/>
            <person name="Shore L."/>
            <person name="Walsh S.V."/>
            <person name="Barrell B.G."/>
            <person name="Dietrich F.S."/>
            <person name="Mulligan J.T."/>
            <person name="Allen E."/>
            <person name="Araujo R."/>
            <person name="Aviles E."/>
            <person name="Berno A."/>
            <person name="Carpenter J."/>
            <person name="Chen E."/>
            <person name="Cherry J.M."/>
            <person name="Chung E."/>
            <person name="Duncan M."/>
            <person name="Hunicke-Smith S."/>
            <person name="Hyman R.W."/>
            <person name="Komp C."/>
            <person name="Lashkari D."/>
            <person name="Lew H."/>
            <person name="Lin D."/>
            <person name="Mosedale D."/>
            <person name="Nakahara K."/>
            <person name="Namath A."/>
            <person name="Oefner P."/>
            <person name="Oh C."/>
            <person name="Petel F.X."/>
            <person name="Roberts D."/>
            <person name="Schramm S."/>
            <person name="Schroeder M."/>
            <person name="Shogren T."/>
            <person name="Shroff N."/>
            <person name="Winant A."/>
            <person name="Yelton M.A."/>
            <person name="Botstein D."/>
            <person name="Davis R.W."/>
            <person name="Johnston M."/>
            <person name="Andrews S."/>
            <person name="Brinkman R."/>
            <person name="Cooper J."/>
            <person name="Ding H."/>
            <person name="Du Z."/>
            <person name="Favello A."/>
            <person name="Fulton L."/>
            <person name="Gattung S."/>
            <person name="Greco T."/>
            <person name="Hallsworth K."/>
            <person name="Hawkins J."/>
            <person name="Hillier L.W."/>
            <person name="Jier M."/>
            <person name="Johnson D."/>
            <person name="Johnston L."/>
            <person name="Kirsten J."/>
            <person name="Kucaba T."/>
            <person name="Langston Y."/>
            <person name="Latreille P."/>
            <person name="Le T."/>
            <person name="Mardis E."/>
            <person name="Menezes S."/>
            <person name="Miller N."/>
            <person name="Nhan M."/>
            <person name="Pauley A."/>
            <person name="Peluso D."/>
            <person name="Rifkin L."/>
            <person name="Riles L."/>
            <person name="Taich A."/>
            <person name="Trevaskis E."/>
            <person name="Vignati D."/>
            <person name="Wilcox L."/>
            <person name="Wohldman P."/>
            <person name="Vaudin M."/>
            <person name="Wilson R."/>
            <person name="Waterston R."/>
            <person name="Albermann K."/>
            <person name="Hani J."/>
            <person name="Heumann K."/>
            <person name="Kleine K."/>
            <person name="Mewes H.-W."/>
            <person name="Zollner A."/>
            <person name="Zaccaria P."/>
        </authorList>
    </citation>
    <scope>NUCLEOTIDE SEQUENCE [LARGE SCALE GENOMIC DNA]</scope>
    <source>
        <strain>ATCC 204508 / S288c</strain>
    </source>
</reference>
<reference key="3">
    <citation type="journal article" date="2014" name="G3 (Bethesda)">
        <title>The reference genome sequence of Saccharomyces cerevisiae: Then and now.</title>
        <authorList>
            <person name="Engel S.R."/>
            <person name="Dietrich F.S."/>
            <person name="Fisk D.G."/>
            <person name="Binkley G."/>
            <person name="Balakrishnan R."/>
            <person name="Costanzo M.C."/>
            <person name="Dwight S.S."/>
            <person name="Hitz B.C."/>
            <person name="Karra K."/>
            <person name="Nash R.S."/>
            <person name="Weng S."/>
            <person name="Wong E.D."/>
            <person name="Lloyd P."/>
            <person name="Skrzypek M.S."/>
            <person name="Miyasato S.R."/>
            <person name="Simison M."/>
            <person name="Cherry J.M."/>
        </authorList>
    </citation>
    <scope>GENOME REANNOTATION</scope>
    <source>
        <strain>ATCC 204508 / S288c</strain>
    </source>
</reference>
<reference key="4">
    <citation type="journal article" date="1991" name="Mol. Cell. Biol.">
        <title>Protein phosphatase 2A in Saccharomyces cerevisiae: effects on cell growth and bud morphogenesis.</title>
        <authorList>
            <person name="Ronne H."/>
            <person name="Carlberg M."/>
            <person name="Hu G.-Z."/>
            <person name="Nehlin J.O."/>
        </authorList>
    </citation>
    <scope>NUCLEOTIDE SEQUENCE [GENOMIC DNA] OF 608-896</scope>
    <source>
        <strain>ATCC 208353 / W303-1A</strain>
    </source>
</reference>
<reference key="5">
    <citation type="journal article" date="1989" name="Eur. J. Biochem.">
        <title>Characterization of trehalose-6-phosphate synthase and trehalose-6-phosphate phosphatase of Saccharomyces cerevisiae.</title>
        <authorList>
            <person name="Vandercammen A."/>
            <person name="Francois J."/>
            <person name="Hers H.-G."/>
        </authorList>
    </citation>
    <scope>FUNCTION</scope>
    <scope>CATALYTIC ACTIVITY</scope>
    <scope>COFACTOR</scope>
    <scope>ACTIVITY REGULATION</scope>
    <scope>BIOPHYSICOCHEMICAL PROPERTIES</scope>
</reference>
<reference key="6">
    <citation type="journal article" date="1997" name="Mol. Microbiol.">
        <title>Structural analysis of the subunits of the trehalose-6-phosphate synthase/phosphatase complex in Saccharomyces cerevisiae and their function during heat shock.</title>
        <authorList>
            <person name="Reinders A."/>
            <person name="Buerckert N."/>
            <person name="Hohmann S."/>
            <person name="Thevelein J.M."/>
            <person name="Boller T."/>
            <person name="Wiemken A."/>
            <person name="De Virgilio C."/>
        </authorList>
    </citation>
    <scope>FUNCTION</scope>
    <scope>INTERACTION WITH TPS1; TPS3 AND TSL1</scope>
</reference>
<reference key="7">
    <citation type="journal article" date="1998" name="J. Biol. Chem.">
        <title>Composition and functional analysis of the Saccharomyces cerevisiae trehalose synthase complex.</title>
        <authorList>
            <person name="Bell W."/>
            <person name="Sun W."/>
            <person name="Hohmann S."/>
            <person name="Wera S."/>
            <person name="Reinders A."/>
            <person name="De Virgilio C."/>
            <person name="Wiemken A."/>
            <person name="Thevelein J.M."/>
        </authorList>
    </citation>
    <scope>SUBUNIT</scope>
</reference>
<reference key="8">
    <citation type="journal article" date="2003" name="Nature">
        <title>Global analysis of protein localization in budding yeast.</title>
        <authorList>
            <person name="Huh W.-K."/>
            <person name="Falvo J.V."/>
            <person name="Gerke L.C."/>
            <person name="Carroll A.S."/>
            <person name="Howson R.W."/>
            <person name="Weissman J.S."/>
            <person name="O'Shea E.K."/>
        </authorList>
    </citation>
    <scope>SUBCELLULAR LOCATION [LARGE SCALE ANALYSIS]</scope>
</reference>
<reference key="9">
    <citation type="journal article" date="2003" name="Nature">
        <title>Global analysis of protein expression in yeast.</title>
        <authorList>
            <person name="Ghaemmaghami S."/>
            <person name="Huh W.-K."/>
            <person name="Bower K."/>
            <person name="Howson R.W."/>
            <person name="Belle A."/>
            <person name="Dephoure N."/>
            <person name="O'Shea E.K."/>
            <person name="Weissman J.S."/>
        </authorList>
    </citation>
    <scope>LEVEL OF PROTEIN EXPRESSION [LARGE SCALE ANALYSIS]</scope>
</reference>
<reference key="10">
    <citation type="journal article" date="2007" name="J. Proteome Res.">
        <title>Large-scale phosphorylation analysis of alpha-factor-arrested Saccharomyces cerevisiae.</title>
        <authorList>
            <person name="Li X."/>
            <person name="Gerber S.A."/>
            <person name="Rudner A.D."/>
            <person name="Beausoleil S.A."/>
            <person name="Haas W."/>
            <person name="Villen J."/>
            <person name="Elias J.E."/>
            <person name="Gygi S.P."/>
        </authorList>
    </citation>
    <scope>IDENTIFICATION BY MASS SPECTROMETRY [LARGE SCALE ANALYSIS]</scope>
    <source>
        <strain>ADR376</strain>
    </source>
</reference>
<reference key="11">
    <citation type="journal article" date="2008" name="Mol. Cell. Proteomics">
        <title>A multidimensional chromatography technology for in-depth phosphoproteome analysis.</title>
        <authorList>
            <person name="Albuquerque C.P."/>
            <person name="Smolka M.B."/>
            <person name="Payne S.H."/>
            <person name="Bafna V."/>
            <person name="Eng J."/>
            <person name="Zhou H."/>
        </authorList>
    </citation>
    <scope>IDENTIFICATION BY MASS SPECTROMETRY [LARGE SCALE ANALYSIS]</scope>
</reference>
<reference key="12">
    <citation type="journal article" date="2012" name="Proc. Natl. Acad. Sci. U.S.A.">
        <title>N-terminal acetylome analyses and functional insights of the N-terminal acetyltransferase NatB.</title>
        <authorList>
            <person name="Van Damme P."/>
            <person name="Lasa M."/>
            <person name="Polevoda B."/>
            <person name="Gazquez C."/>
            <person name="Elosegui-Artola A."/>
            <person name="Kim D.S."/>
            <person name="De Juan-Pardo E."/>
            <person name="Demeyer K."/>
            <person name="Hole K."/>
            <person name="Larrea E."/>
            <person name="Timmerman E."/>
            <person name="Prieto J."/>
            <person name="Arnesen T."/>
            <person name="Sherman F."/>
            <person name="Gevaert K."/>
            <person name="Aldabe R."/>
        </authorList>
    </citation>
    <scope>IDENTIFICATION BY MASS SPECTROMETRY [LARGE SCALE ANALYSIS]</scope>
</reference>
<protein>
    <recommendedName>
        <fullName>Trehalose-phosphatase</fullName>
        <ecNumber evidence="3">3.1.3.12</ecNumber>
    </recommendedName>
    <alternativeName>
        <fullName>Trehalose synthase complex catalytic subunit TPS2</fullName>
    </alternativeName>
    <alternativeName>
        <fullName>Trehalose-6-phosphate phosphatase</fullName>
        <shortName>TPP</shortName>
    </alternativeName>
</protein>
<gene>
    <name evidence="6" type="primary">TPS2</name>
    <name type="synonym">PFK3</name>
    <name type="ordered locus">YDR074W</name>
    <name type="ORF">YD8554.07</name>
</gene>
<dbReference type="EC" id="3.1.3.12" evidence="3"/>
<dbReference type="EMBL" id="X70694">
    <property type="protein sequence ID" value="CAA50025.1"/>
    <property type="molecule type" value="Genomic_DNA"/>
</dbReference>
<dbReference type="EMBL" id="Z46796">
    <property type="protein sequence ID" value="CAA86796.1"/>
    <property type="molecule type" value="Genomic_DNA"/>
</dbReference>
<dbReference type="EMBL" id="Z74370">
    <property type="protein sequence ID" value="CAA98893.1"/>
    <property type="molecule type" value="Genomic_DNA"/>
</dbReference>
<dbReference type="EMBL" id="X58858">
    <property type="protein sequence ID" value="CAA41661.1"/>
    <property type="molecule type" value="Genomic_DNA"/>
</dbReference>
<dbReference type="EMBL" id="BK006938">
    <property type="protein sequence ID" value="DAA11920.1"/>
    <property type="molecule type" value="Genomic_DNA"/>
</dbReference>
<dbReference type="PIR" id="S48761">
    <property type="entry name" value="S48761"/>
</dbReference>
<dbReference type="RefSeq" id="NP_010359.1">
    <property type="nucleotide sequence ID" value="NM_001180382.1"/>
</dbReference>
<dbReference type="SMR" id="P31688"/>
<dbReference type="BioGRID" id="32129">
    <property type="interactions" value="613"/>
</dbReference>
<dbReference type="ComplexPortal" id="CPX-582">
    <property type="entry name" value="Trehalose-6-phosphate synthase/phosphatase complex, tps3 variant"/>
</dbReference>
<dbReference type="ComplexPortal" id="CPX-583">
    <property type="entry name" value="Trehalose-6-phosphate synthase/phosphatase complex, tsl1 variant"/>
</dbReference>
<dbReference type="DIP" id="DIP-823N"/>
<dbReference type="FunCoup" id="P31688">
    <property type="interactions" value="332"/>
</dbReference>
<dbReference type="IntAct" id="P31688">
    <property type="interactions" value="13"/>
</dbReference>
<dbReference type="MINT" id="P31688"/>
<dbReference type="STRING" id="4932.YDR074W"/>
<dbReference type="CAZy" id="GT20">
    <property type="family name" value="Glycosyltransferase Family 20"/>
</dbReference>
<dbReference type="GlyGen" id="P31688">
    <property type="glycosylation" value="1 site"/>
</dbReference>
<dbReference type="iPTMnet" id="P31688"/>
<dbReference type="PaxDb" id="4932-YDR074W"/>
<dbReference type="PeptideAtlas" id="P31688"/>
<dbReference type="EnsemblFungi" id="YDR074W_mRNA">
    <property type="protein sequence ID" value="YDR074W"/>
    <property type="gene ID" value="YDR074W"/>
</dbReference>
<dbReference type="GeneID" id="851646"/>
<dbReference type="KEGG" id="sce:YDR074W"/>
<dbReference type="AGR" id="SGD:S000002481"/>
<dbReference type="SGD" id="S000002481">
    <property type="gene designation" value="TPS2"/>
</dbReference>
<dbReference type="VEuPathDB" id="FungiDB:YDR074W"/>
<dbReference type="eggNOG" id="KOG1050">
    <property type="taxonomic scope" value="Eukaryota"/>
</dbReference>
<dbReference type="GeneTree" id="ENSGT00940000167933"/>
<dbReference type="HOGENOM" id="CLU_002351_3_0_1"/>
<dbReference type="InParanoid" id="P31688"/>
<dbReference type="OMA" id="VHPMPIE"/>
<dbReference type="OrthoDB" id="755951at2759"/>
<dbReference type="BioCyc" id="MetaCyc:YDR074W-MONOMER"/>
<dbReference type="BioCyc" id="YEAST:YDR074W-MONOMER"/>
<dbReference type="BRENDA" id="2.4.1.15">
    <property type="organism ID" value="984"/>
</dbReference>
<dbReference type="BRENDA" id="3.1.3.12">
    <property type="organism ID" value="984"/>
</dbReference>
<dbReference type="SABIO-RK" id="P31688"/>
<dbReference type="BioGRID-ORCS" id="851646">
    <property type="hits" value="9 hits in 10 CRISPR screens"/>
</dbReference>
<dbReference type="PRO" id="PR:P31688"/>
<dbReference type="Proteomes" id="UP000002311">
    <property type="component" value="Chromosome IV"/>
</dbReference>
<dbReference type="RNAct" id="P31688">
    <property type="molecule type" value="protein"/>
</dbReference>
<dbReference type="GO" id="GO:0005946">
    <property type="term" value="C:alpha,alpha-trehalose-phosphate synthase complex (UDP-forming)"/>
    <property type="evidence" value="ECO:0000353"/>
    <property type="project" value="SGD"/>
</dbReference>
<dbReference type="GO" id="GO:0005739">
    <property type="term" value="C:mitochondrion"/>
    <property type="evidence" value="ECO:0007005"/>
    <property type="project" value="SGD"/>
</dbReference>
<dbReference type="GO" id="GO:0004805">
    <property type="term" value="F:trehalose-phosphatase activity"/>
    <property type="evidence" value="ECO:0000315"/>
    <property type="project" value="SGD"/>
</dbReference>
<dbReference type="GO" id="GO:0006995">
    <property type="term" value="P:cellular response to nitrogen starvation"/>
    <property type="evidence" value="ECO:0000315"/>
    <property type="project" value="SGD"/>
</dbReference>
<dbReference type="GO" id="GO:0010508">
    <property type="term" value="P:positive regulation of autophagy"/>
    <property type="evidence" value="ECO:0000315"/>
    <property type="project" value="SGD"/>
</dbReference>
<dbReference type="GO" id="GO:0005992">
    <property type="term" value="P:trehalose biosynthetic process"/>
    <property type="evidence" value="ECO:0000315"/>
    <property type="project" value="SGD"/>
</dbReference>
<dbReference type="GO" id="GO:0005991">
    <property type="term" value="P:trehalose metabolic process"/>
    <property type="evidence" value="ECO:0000315"/>
    <property type="project" value="SGD"/>
</dbReference>
<dbReference type="CDD" id="cd03788">
    <property type="entry name" value="GT20_TPS"/>
    <property type="match status" value="1"/>
</dbReference>
<dbReference type="CDD" id="cd01627">
    <property type="entry name" value="HAD_TPP"/>
    <property type="match status" value="1"/>
</dbReference>
<dbReference type="FunFam" id="3.40.50.2000:FF:000036">
    <property type="entry name" value="Alpha,alpha-trehalose-phosphate synthase subunit Tps2"/>
    <property type="match status" value="1"/>
</dbReference>
<dbReference type="FunFam" id="3.40.50.2000:FF:000131">
    <property type="entry name" value="Trehalose-6-phosphate phosphatase"/>
    <property type="match status" value="1"/>
</dbReference>
<dbReference type="FunFam" id="3.30.70.1020:FF:000002">
    <property type="entry name" value="Trehalose-6-phosphate synthase 2"/>
    <property type="match status" value="1"/>
</dbReference>
<dbReference type="Gene3D" id="3.40.50.2000">
    <property type="entry name" value="Glycogen Phosphorylase B"/>
    <property type="match status" value="2"/>
</dbReference>
<dbReference type="Gene3D" id="3.40.50.1000">
    <property type="entry name" value="HAD superfamily/HAD-like"/>
    <property type="match status" value="1"/>
</dbReference>
<dbReference type="Gene3D" id="3.30.70.1020">
    <property type="entry name" value="Trehalose-6-phosphate phosphatase related protein, domain 2"/>
    <property type="match status" value="1"/>
</dbReference>
<dbReference type="InterPro" id="IPR001830">
    <property type="entry name" value="Glyco_trans_20"/>
</dbReference>
<dbReference type="InterPro" id="IPR036412">
    <property type="entry name" value="HAD-like_sf"/>
</dbReference>
<dbReference type="InterPro" id="IPR006379">
    <property type="entry name" value="HAD-SF_hydro_IIB"/>
</dbReference>
<dbReference type="InterPro" id="IPR023214">
    <property type="entry name" value="HAD_sf"/>
</dbReference>
<dbReference type="InterPro" id="IPR003337">
    <property type="entry name" value="Trehalose_PPase"/>
</dbReference>
<dbReference type="NCBIfam" id="TIGR01484">
    <property type="entry name" value="HAD-SF-IIB"/>
    <property type="match status" value="1"/>
</dbReference>
<dbReference type="NCBIfam" id="TIGR00685">
    <property type="entry name" value="T6PP"/>
    <property type="match status" value="1"/>
</dbReference>
<dbReference type="PANTHER" id="PTHR10788">
    <property type="entry name" value="TREHALOSE-6-PHOSPHATE SYNTHASE"/>
    <property type="match status" value="1"/>
</dbReference>
<dbReference type="PANTHER" id="PTHR10788:SF123">
    <property type="entry name" value="TREHALOSE-PHOSPHATASE"/>
    <property type="match status" value="1"/>
</dbReference>
<dbReference type="Pfam" id="PF00982">
    <property type="entry name" value="Glyco_transf_20"/>
    <property type="match status" value="1"/>
</dbReference>
<dbReference type="Pfam" id="PF02358">
    <property type="entry name" value="Trehalose_PPase"/>
    <property type="match status" value="1"/>
</dbReference>
<dbReference type="SUPFAM" id="SSF56784">
    <property type="entry name" value="HAD-like"/>
    <property type="match status" value="1"/>
</dbReference>
<dbReference type="SUPFAM" id="SSF53756">
    <property type="entry name" value="UDP-Glycosyltransferase/glycogen phosphorylase"/>
    <property type="match status" value="1"/>
</dbReference>
<proteinExistence type="evidence at protein level"/>